<name>YZ17_AQUAE</name>
<reference key="1">
    <citation type="journal article" date="1998" name="Nature">
        <title>The complete genome of the hyperthermophilic bacterium Aquifex aeolicus.</title>
        <authorList>
            <person name="Deckert G."/>
            <person name="Warren P.V."/>
            <person name="Gaasterland T."/>
            <person name="Young W.G."/>
            <person name="Lenox A.L."/>
            <person name="Graham D.E."/>
            <person name="Overbeek R."/>
            <person name="Snead M.A."/>
            <person name="Keller M."/>
            <person name="Aujay M."/>
            <person name="Huber R."/>
            <person name="Feldman R.A."/>
            <person name="Short J.M."/>
            <person name="Olsen G.J."/>
            <person name="Swanson R.V."/>
        </authorList>
    </citation>
    <scope>NUCLEOTIDE SEQUENCE [LARGE SCALE GENOMIC DNA]</scope>
    <source>
        <strain>VF5</strain>
    </source>
</reference>
<dbReference type="EMBL" id="AE000667">
    <property type="protein sequence ID" value="AAC07960.1"/>
    <property type="molecule type" value="Genomic_DNA"/>
</dbReference>
<dbReference type="RefSeq" id="NP_046408.1">
    <property type="nucleotide sequence ID" value="NC_001880.1"/>
</dbReference>
<dbReference type="RefSeq" id="WP_010890554.1">
    <property type="nucleotide sequence ID" value="NC_001880.1"/>
</dbReference>
<dbReference type="EnsemblBacteria" id="AAC07960">
    <property type="protein sequence ID" value="AAC07960"/>
    <property type="gene ID" value="aq_aa17"/>
</dbReference>
<dbReference type="KEGG" id="aae:aq_aa17"/>
<dbReference type="HOGENOM" id="CLU_796069_0_0_0"/>
<dbReference type="InParanoid" id="O66408"/>
<dbReference type="Proteomes" id="UP000000798">
    <property type="component" value="Plasmid ece1"/>
</dbReference>
<dbReference type="PROSITE" id="PS51257">
    <property type="entry name" value="PROKAR_LIPOPROTEIN"/>
    <property type="match status" value="1"/>
</dbReference>
<proteinExistence type="predicted"/>
<sequence length="348" mass="37574">MRREILSRTLLLSSLFVAGGFLTACGGGGGGTGGGEQGKITNELQAKAALGNSLSAIRSSAGLTEDTQTGVGAASVGNKGGWLRDALKLYKSAAPQTGTLASQQQYTCDNGGTATIDYSYDSNTRTASATITFDNCGNTCSLNKYVIFNGTMRFSGKDINQNYILESGSISVDSGFSYTDQCENEGVYFEGNFSISVKGYIPNTGDIEDGNNNYKADLTLDGGPVKVTDGSKWERGSFDNLTFYINEYYPASADYEWKVNGGFRYQDSYCVTDPVYLSFNTTNIFKGYNTVECEYTGRLSVNNDLIVAESYDPDSKPSETENYLKILFNGNVVFDNLCTNFNPPDTCS</sequence>
<keyword id="KW-0614">Plasmid</keyword>
<keyword id="KW-1185">Reference proteome</keyword>
<protein>
    <recommendedName>
        <fullName>Uncharacterized protein aq_aa17</fullName>
    </recommendedName>
</protein>
<accession>O66408</accession>
<organism>
    <name type="scientific">Aquifex aeolicus (strain VF5)</name>
    <dbReference type="NCBI Taxonomy" id="224324"/>
    <lineage>
        <taxon>Bacteria</taxon>
        <taxon>Pseudomonadati</taxon>
        <taxon>Aquificota</taxon>
        <taxon>Aquificia</taxon>
        <taxon>Aquificales</taxon>
        <taxon>Aquificaceae</taxon>
        <taxon>Aquifex</taxon>
    </lineage>
</organism>
<feature type="chain" id="PRO_0000186988" description="Uncharacterized protein aq_aa17">
    <location>
        <begin position="1"/>
        <end position="348"/>
    </location>
</feature>
<gene>
    <name type="ordered locus">aq_aa17</name>
</gene>
<geneLocation type="plasmid">
    <name>ece1</name>
</geneLocation>